<organism>
    <name type="scientific">Pseudomonas aeruginosa (strain ATCC 15692 / DSM 22644 / CIP 104116 / JCM 14847 / LMG 12228 / 1C / PRS 101 / PAO1)</name>
    <dbReference type="NCBI Taxonomy" id="208964"/>
    <lineage>
        <taxon>Bacteria</taxon>
        <taxon>Pseudomonadati</taxon>
        <taxon>Pseudomonadota</taxon>
        <taxon>Gammaproteobacteria</taxon>
        <taxon>Pseudomonadales</taxon>
        <taxon>Pseudomonadaceae</taxon>
        <taxon>Pseudomonas</taxon>
    </lineage>
</organism>
<proteinExistence type="evidence at protein level"/>
<keyword id="KW-0378">Hydrolase</keyword>
<keyword id="KW-0479">Metal-binding</keyword>
<keyword id="KW-1185">Reference proteome</keyword>
<keyword id="KW-0862">Zinc</keyword>
<protein>
    <recommendedName>
        <fullName>8-oxoguanine deaminase</fullName>
        <ecNumber>3.5.4.32</ecNumber>
    </recommendedName>
</protein>
<feature type="chain" id="PRO_0000418757" description="8-oxoguanine deaminase">
    <location>
        <begin position="1"/>
        <end position="449"/>
    </location>
</feature>
<feature type="binding site" evidence="1">
    <location>
        <position position="64"/>
    </location>
    <ligand>
        <name>Zn(2+)</name>
        <dbReference type="ChEBI" id="CHEBI:29105"/>
    </ligand>
</feature>
<feature type="binding site" evidence="1">
    <location>
        <position position="66"/>
    </location>
    <ligand>
        <name>Zn(2+)</name>
        <dbReference type="ChEBI" id="CHEBI:29105"/>
    </ligand>
</feature>
<feature type="binding site" evidence="1">
    <location>
        <position position="69"/>
    </location>
    <ligand>
        <name>substrate</name>
    </ligand>
</feature>
<feature type="binding site" evidence="1">
    <location>
        <position position="232"/>
    </location>
    <ligand>
        <name>Zn(2+)</name>
        <dbReference type="ChEBI" id="CHEBI:29105"/>
    </ligand>
</feature>
<feature type="binding site" evidence="1">
    <location>
        <position position="235"/>
    </location>
    <ligand>
        <name>substrate</name>
    </ligand>
</feature>
<feature type="binding site" evidence="1">
    <location>
        <position position="269"/>
    </location>
    <ligand>
        <name>substrate</name>
    </ligand>
</feature>
<feature type="binding site" evidence="1">
    <location>
        <position position="269"/>
    </location>
    <ligand>
        <name>Zn(2+)</name>
        <dbReference type="ChEBI" id="CHEBI:29105"/>
    </ligand>
</feature>
<feature type="binding site" evidence="1">
    <location>
        <position position="320"/>
    </location>
    <ligand>
        <name>Zn(2+)</name>
        <dbReference type="ChEBI" id="CHEBI:29105"/>
    </ligand>
</feature>
<comment type="function">
    <text evidence="2">Specifically deaminates 8-Oxoguanine (8-oxoG) to uric acid. 8-oxoG is formed via the oxidation of guanine within DNA by reactive oxygen species and leads, if uncorrected, to the incorporation of 8-oxoG:A mismatches and eventually to G:C to T:A transversions.</text>
</comment>
<comment type="catalytic activity">
    <reaction evidence="2">
        <text>8-oxoguanine + H2O + H(+) = urate + NH4(+)</text>
        <dbReference type="Rhea" id="RHEA:32067"/>
        <dbReference type="ChEBI" id="CHEBI:15377"/>
        <dbReference type="ChEBI" id="CHEBI:15378"/>
        <dbReference type="ChEBI" id="CHEBI:17775"/>
        <dbReference type="ChEBI" id="CHEBI:28938"/>
        <dbReference type="ChEBI" id="CHEBI:52617"/>
        <dbReference type="EC" id="3.5.4.32"/>
    </reaction>
</comment>
<comment type="cofactor">
    <cofactor evidence="1">
        <name>Zn(2+)</name>
        <dbReference type="ChEBI" id="CHEBI:29105"/>
    </cofactor>
    <text evidence="1">Binds 1 zinc ion per subunit.</text>
</comment>
<comment type="biophysicochemical properties">
    <kinetics>
        <KM evidence="2">2.6 mM for guanine</KM>
        <KM evidence="2">1.8 mM for isocytosine</KM>
        <text>kcat is 3.3 sec(-1) with guanine as substrate. kcat is 3.9 sec(-1) with isocytosine as substrate.</text>
    </kinetics>
</comment>
<comment type="pathway">
    <text>Purine metabolism.</text>
</comment>
<comment type="subunit">
    <text evidence="1">Homodimer.</text>
</comment>
<comment type="similarity">
    <text evidence="3">Belongs to the metallo-dependent hydrolases superfamily. ATZ/TRZ family.</text>
</comment>
<name>OXODE_PSEAE</name>
<reference key="1">
    <citation type="journal article" date="2000" name="Nature">
        <title>Complete genome sequence of Pseudomonas aeruginosa PAO1, an opportunistic pathogen.</title>
        <authorList>
            <person name="Stover C.K."/>
            <person name="Pham X.-Q.T."/>
            <person name="Erwin A.L."/>
            <person name="Mizoguchi S.D."/>
            <person name="Warrener P."/>
            <person name="Hickey M.J."/>
            <person name="Brinkman F.S.L."/>
            <person name="Hufnagle W.O."/>
            <person name="Kowalik D.J."/>
            <person name="Lagrou M."/>
            <person name="Garber R.L."/>
            <person name="Goltry L."/>
            <person name="Tolentino E."/>
            <person name="Westbrock-Wadman S."/>
            <person name="Yuan Y."/>
            <person name="Brody L.L."/>
            <person name="Coulter S.N."/>
            <person name="Folger K.R."/>
            <person name="Kas A."/>
            <person name="Larbig K."/>
            <person name="Lim R.M."/>
            <person name="Smith K.A."/>
            <person name="Spencer D.H."/>
            <person name="Wong G.K.-S."/>
            <person name="Wu Z."/>
            <person name="Paulsen I.T."/>
            <person name="Reizer J."/>
            <person name="Saier M.H. Jr."/>
            <person name="Hancock R.E.W."/>
            <person name="Lory S."/>
            <person name="Olson M.V."/>
        </authorList>
    </citation>
    <scope>NUCLEOTIDE SEQUENCE [LARGE SCALE GENOMIC DNA]</scope>
    <source>
        <strain>ATCC 15692 / DSM 22644 / CIP 104116 / JCM 14847 / LMG 12228 / 1C / PRS 101 / PAO1</strain>
    </source>
</reference>
<reference key="2">
    <citation type="journal article" date="2010" name="J. Am. Chem. Soc.">
        <title>The hunt for 8-oxoguanine deaminase.</title>
        <authorList>
            <person name="Hall R.S."/>
            <person name="Fedorov A.A."/>
            <person name="Marti-Arbona R."/>
            <person name="Fedorov E.V."/>
            <person name="Kolb P."/>
            <person name="Sauder J.M."/>
            <person name="Burley S.K."/>
            <person name="Shoichet B.K."/>
            <person name="Almo S.C."/>
            <person name="Raushel F.M."/>
        </authorList>
    </citation>
    <scope>FUNCTION</scope>
    <scope>CATALYTIC ACTIVITY</scope>
    <scope>BIOPHYSICOCHEMICAL PROPERTIES</scope>
</reference>
<dbReference type="EC" id="3.5.4.32"/>
<dbReference type="EMBL" id="AE004091">
    <property type="protein sequence ID" value="AAG03532.1"/>
    <property type="molecule type" value="Genomic_DNA"/>
</dbReference>
<dbReference type="PIR" id="F83627">
    <property type="entry name" value="F83627"/>
</dbReference>
<dbReference type="RefSeq" id="NP_248832.1">
    <property type="nucleotide sequence ID" value="NC_002516.2"/>
</dbReference>
<dbReference type="RefSeq" id="WP_003112635.1">
    <property type="nucleotide sequence ID" value="NZ_QZGE01000015.1"/>
</dbReference>
<dbReference type="SMR" id="Q9I6Z0"/>
<dbReference type="STRING" id="208964.PA0142"/>
<dbReference type="PaxDb" id="208964-PA0142"/>
<dbReference type="GeneID" id="879447"/>
<dbReference type="KEGG" id="pae:PA0142"/>
<dbReference type="PATRIC" id="fig|208964.12.peg.148"/>
<dbReference type="PseudoCAP" id="PA0142"/>
<dbReference type="HOGENOM" id="CLU_012358_2_3_6"/>
<dbReference type="InParanoid" id="Q9I6Z0"/>
<dbReference type="OrthoDB" id="9807210at2"/>
<dbReference type="PhylomeDB" id="Q9I6Z0"/>
<dbReference type="BioCyc" id="MetaCyc:MONOMER-15640"/>
<dbReference type="BioCyc" id="PAER208964:G1FZ6-144-MONOMER"/>
<dbReference type="BRENDA" id="3.5.4.32">
    <property type="organism ID" value="5087"/>
</dbReference>
<dbReference type="Proteomes" id="UP000002438">
    <property type="component" value="Chromosome"/>
</dbReference>
<dbReference type="GO" id="GO:0005829">
    <property type="term" value="C:cytosol"/>
    <property type="evidence" value="ECO:0000318"/>
    <property type="project" value="GO_Central"/>
</dbReference>
<dbReference type="GO" id="GO:0102127">
    <property type="term" value="F:8-oxoguanine deaminase activity"/>
    <property type="evidence" value="ECO:0007669"/>
    <property type="project" value="UniProtKB-EC"/>
</dbReference>
<dbReference type="GO" id="GO:0019239">
    <property type="term" value="F:deaminase activity"/>
    <property type="evidence" value="ECO:0000318"/>
    <property type="project" value="GO_Central"/>
</dbReference>
<dbReference type="GO" id="GO:0046872">
    <property type="term" value="F:metal ion binding"/>
    <property type="evidence" value="ECO:0007669"/>
    <property type="project" value="UniProtKB-KW"/>
</dbReference>
<dbReference type="CDD" id="cd01298">
    <property type="entry name" value="ATZ_TRZ_like"/>
    <property type="match status" value="1"/>
</dbReference>
<dbReference type="FunFam" id="3.20.20.140:FF:000014">
    <property type="entry name" value="5-methylthioadenosine/S-adenosylhomocysteine deaminase"/>
    <property type="match status" value="1"/>
</dbReference>
<dbReference type="Gene3D" id="3.20.20.140">
    <property type="entry name" value="Metal-dependent hydrolases"/>
    <property type="match status" value="1"/>
</dbReference>
<dbReference type="Gene3D" id="2.30.40.10">
    <property type="entry name" value="Urease, subunit C, domain 1"/>
    <property type="match status" value="1"/>
</dbReference>
<dbReference type="InterPro" id="IPR006680">
    <property type="entry name" value="Amidohydro-rel"/>
</dbReference>
<dbReference type="InterPro" id="IPR011059">
    <property type="entry name" value="Metal-dep_hydrolase_composite"/>
</dbReference>
<dbReference type="InterPro" id="IPR032466">
    <property type="entry name" value="Metal_Hydrolase"/>
</dbReference>
<dbReference type="InterPro" id="IPR050287">
    <property type="entry name" value="MTA/SAH_deaminase"/>
</dbReference>
<dbReference type="NCBIfam" id="NF006055">
    <property type="entry name" value="PRK08203.1"/>
    <property type="match status" value="1"/>
</dbReference>
<dbReference type="PANTHER" id="PTHR43794:SF11">
    <property type="entry name" value="AMIDOHYDROLASE-RELATED DOMAIN-CONTAINING PROTEIN"/>
    <property type="match status" value="1"/>
</dbReference>
<dbReference type="PANTHER" id="PTHR43794">
    <property type="entry name" value="AMINOHYDROLASE SSNA-RELATED"/>
    <property type="match status" value="1"/>
</dbReference>
<dbReference type="Pfam" id="PF01979">
    <property type="entry name" value="Amidohydro_1"/>
    <property type="match status" value="1"/>
</dbReference>
<dbReference type="SUPFAM" id="SSF51338">
    <property type="entry name" value="Composite domain of metallo-dependent hydrolases"/>
    <property type="match status" value="1"/>
</dbReference>
<dbReference type="SUPFAM" id="SSF51556">
    <property type="entry name" value="Metallo-dependent hydrolases"/>
    <property type="match status" value="1"/>
</dbReference>
<sequence>MSRTWIRNPLAIFTANGLDAAGGLVVEDGRIVELLGAGQQPAQPCASQFDASRHVVLPGLVNTHHHFYQTLTRAWAPVVNQPLFPWLKTLYPVWARLTPEKLELATKVALAELLLSGCTTAADHHYLFPGGLEQAIDVQAGVVEELGMRAMLTRGSMSLGEKDGGLPPQQTVQEAETILADSERLIARYHQRGDGARVQIALAPCSPFSVTPEIMRASAEVAARHDVRLHTHLAETLDEEDFCLQRFGLRTVDYLDSVGWLGPRTWLAHGIHFNAEEIRRLGEAGTGICHCPSSNMRLASGICPTVELEAAGAPIGLGVDGSASNDASNMILEARQALYLQRLRYGAERITPELALGWATRGSARLLGRSDIGELAPGKQADLALFKLDELRFSGSHDPLSALLLCAADRADRVMVGGAWRVVDGAVEGLDLAALIARHRAAASALIAG</sequence>
<accession>Q9I6Z0</accession>
<gene>
    <name type="ordered locus">PA0142</name>
</gene>
<evidence type="ECO:0000250" key="1"/>
<evidence type="ECO:0000269" key="2">
    <source>
    </source>
</evidence>
<evidence type="ECO:0000305" key="3"/>